<gene>
    <name type="primary">Cops6</name>
    <name type="synonym">Csn6</name>
</gene>
<proteinExistence type="evidence at protein level"/>
<sequence>MAAAAAAGANGSGGSSGMEVDAAVPSVMASGVTGSVSVALHPLVILNISDHWIRMRSQEGRPMQVIGALIGKQEGRNIEVMNSFELLSHTVEEKIIIDKEYYYTKEEQFKQVFKELEFLGWYTTGGPPDPSDIHVHKQVCEIIESPLFLKLNPMTKHTDLPVSVFESVIDIINGEATMLFAELTYTLATEEAERIGVDHVARMTATGSGENSTVAEHLIAQHSAIKMLHSRVKLILEYVKASEAGEVPFNHEILREAYALCHCLPVLSTDKFKTDFYDQCNDVGLMAYLGTITKTCNTMNQFVNKFNVLYDRQGIGRRMRGLFF</sequence>
<organism>
    <name type="scientific">Mus musculus</name>
    <name type="common">Mouse</name>
    <dbReference type="NCBI Taxonomy" id="10090"/>
    <lineage>
        <taxon>Eukaryota</taxon>
        <taxon>Metazoa</taxon>
        <taxon>Chordata</taxon>
        <taxon>Craniata</taxon>
        <taxon>Vertebrata</taxon>
        <taxon>Euteleostomi</taxon>
        <taxon>Mammalia</taxon>
        <taxon>Eutheria</taxon>
        <taxon>Euarchontoglires</taxon>
        <taxon>Glires</taxon>
        <taxon>Rodentia</taxon>
        <taxon>Myomorpha</taxon>
        <taxon>Muroidea</taxon>
        <taxon>Muridae</taxon>
        <taxon>Murinae</taxon>
        <taxon>Mus</taxon>
        <taxon>Mus</taxon>
    </lineage>
</organism>
<keyword id="KW-0963">Cytoplasm</keyword>
<keyword id="KW-0539">Nucleus</keyword>
<keyword id="KW-1185">Reference proteome</keyword>
<keyword id="KW-0736">Signalosome</keyword>
<comment type="function">
    <text evidence="1">Component of the COP9 signalosome complex (CSN), a complex involved in various cellular and developmental processes (By similarity). The CSN complex is an essential regulator of the ubiquitin (Ubl) conjugation pathway by mediating the deneddylation of the cullin subunits of SCF-type E3 ligase complexes, leading to decrease the Ubl ligase activity of SCF-type complexes such as SCF, CSA or DDB2 (By similarity). The complex is also involved in phosphorylation of p53/TP53, c-jun/JUN, IkappaBalpha/NFKBIA, ITPK1 and IRF8, possibly via its association with CK2 and PKD kinases (By similarity). CSN-dependent phosphorylation of TP53 and JUN promotes and protects degradation by the Ubl system, respectively (By similarity). Has some glucocorticoid receptor-responsive activity (By similarity). Stabilizes COP1 through reducing COP1 auto-ubiquitination and decelerating COP1 turnover rate, hence regulates the ubiquitination of COP1 targets, including SFN (By similarity).</text>
</comment>
<comment type="subunit">
    <text evidence="1 3">Component of the CSN complex, composed of COPS1/GPS1, COPS2, COPS3, COPS4, COPS5, COPS6, COPS7 (COPS7A or COPS7B), COPS8 and COPS9 (PubMed:9707402). In the complex, it probably interacts directly with COPS2, COPS4, COPS5, COPS7 (COPS7A or COPS7B) and COPS9 (By similarity). Interacts with the translation initiation factor EIF3S6 (By similarity). Interacts weakly with RBX1 (By similarity). Directly interacts with COP1 and 14-3-3 protein sigma/SFN (By similarity). Interacts with ERCC6 (By similarity).</text>
</comment>
<comment type="subcellular location">
    <subcellularLocation>
        <location evidence="1">Cytoplasm</location>
    </subcellularLocation>
    <subcellularLocation>
        <location evidence="1">Nucleus</location>
    </subcellularLocation>
</comment>
<comment type="similarity">
    <text evidence="4">Belongs to the peptidase M67A family. CSN6 subfamily.</text>
</comment>
<comment type="caution">
    <text evidence="4">Although related to the peptidase M67A family, it lacks the JAMM motif that probably constitutes the catalytic center and therefore it probably does not have a protease activity.</text>
</comment>
<reference key="1">
    <citation type="journal article" date="1998" name="Curr. Biol.">
        <title>The COP9 complex is conserved between plants and mammals and is related to the 26S proteasome regulatory complex.</title>
        <authorList>
            <person name="Wei N."/>
            <person name="Tsuge T."/>
            <person name="Serino G."/>
            <person name="Dohmae N."/>
            <person name="Takio K."/>
            <person name="Matsui M."/>
            <person name="Deng X.-W."/>
        </authorList>
    </citation>
    <scope>NUCLEOTIDE SEQUENCE [MRNA]</scope>
    <scope>IDENTIFICATION IN THE CSN COMPLEX</scope>
    <source>
        <strain>BALB/cJ</strain>
    </source>
</reference>
<reference key="2">
    <citation type="journal article" date="2004" name="Genome Res.">
        <title>The status, quality, and expansion of the NIH full-length cDNA project: the Mammalian Gene Collection (MGC).</title>
        <authorList>
            <consortium name="The MGC Project Team"/>
        </authorList>
    </citation>
    <scope>NUCLEOTIDE SEQUENCE [LARGE SCALE MRNA]</scope>
    <source>
        <strain>FVB/N</strain>
        <tissue>Liver</tissue>
        <tissue>Mammary tumor</tissue>
    </source>
</reference>
<reference key="3">
    <citation type="journal article" date="2010" name="Cell">
        <title>A tissue-specific atlas of mouse protein phosphorylation and expression.</title>
        <authorList>
            <person name="Huttlin E.L."/>
            <person name="Jedrychowski M.P."/>
            <person name="Elias J.E."/>
            <person name="Goswami T."/>
            <person name="Rad R."/>
            <person name="Beausoleil S.A."/>
            <person name="Villen J."/>
            <person name="Haas W."/>
            <person name="Sowa M.E."/>
            <person name="Gygi S.P."/>
        </authorList>
    </citation>
    <scope>IDENTIFICATION BY MASS SPECTROMETRY [LARGE SCALE ANALYSIS]</scope>
    <source>
        <tissue>Brain</tissue>
        <tissue>Brown adipose tissue</tissue>
        <tissue>Heart</tissue>
        <tissue>Kidney</tissue>
        <tissue>Liver</tissue>
        <tissue>Lung</tissue>
        <tissue>Pancreas</tissue>
        <tissue>Spleen</tissue>
        <tissue>Testis</tissue>
    </source>
</reference>
<name>CSN6_MOUSE</name>
<feature type="chain" id="PRO_0000194861" description="COP9 signalosome complex subunit 6">
    <location>
        <begin position="1"/>
        <end position="324"/>
    </location>
</feature>
<feature type="domain" description="MPN" evidence="2">
    <location>
        <begin position="38"/>
        <end position="171"/>
    </location>
</feature>
<dbReference type="EMBL" id="AF071315">
    <property type="protein sequence ID" value="AAC33902.1"/>
    <property type="molecule type" value="mRNA"/>
</dbReference>
<dbReference type="EMBL" id="BC004664">
    <property type="protein sequence ID" value="AAH04664.1"/>
    <property type="molecule type" value="mRNA"/>
</dbReference>
<dbReference type="EMBL" id="BC014286">
    <property type="protein sequence ID" value="AAH14286.1"/>
    <property type="molecule type" value="mRNA"/>
</dbReference>
<dbReference type="CCDS" id="CCDS19792.1"/>
<dbReference type="RefSeq" id="NP_036132.1">
    <property type="nucleotide sequence ID" value="NM_012002.3"/>
</dbReference>
<dbReference type="SMR" id="O88545"/>
<dbReference type="BioGRID" id="205044">
    <property type="interactions" value="50"/>
</dbReference>
<dbReference type="CORUM" id="O88545"/>
<dbReference type="FunCoup" id="O88545">
    <property type="interactions" value="4251"/>
</dbReference>
<dbReference type="IntAct" id="O88545">
    <property type="interactions" value="1"/>
</dbReference>
<dbReference type="MINT" id="O88545"/>
<dbReference type="STRING" id="10090.ENSMUSP00000019638"/>
<dbReference type="MEROPS" id="M67.972"/>
<dbReference type="iPTMnet" id="O88545"/>
<dbReference type="PhosphoSitePlus" id="O88545"/>
<dbReference type="SwissPalm" id="O88545"/>
<dbReference type="jPOST" id="O88545"/>
<dbReference type="PaxDb" id="10090-ENSMUSP00000019638"/>
<dbReference type="ProteomicsDB" id="284139"/>
<dbReference type="Pumba" id="O88545"/>
<dbReference type="Antibodypedia" id="30510">
    <property type="antibodies" value="218 antibodies from 25 providers"/>
</dbReference>
<dbReference type="DNASU" id="26893"/>
<dbReference type="Ensembl" id="ENSMUST00000019638.15">
    <property type="protein sequence ID" value="ENSMUSP00000019638.9"/>
    <property type="gene ID" value="ENSMUSG00000019494.15"/>
</dbReference>
<dbReference type="GeneID" id="26893"/>
<dbReference type="KEGG" id="mmu:26893"/>
<dbReference type="UCSC" id="uc009aer.1">
    <property type="organism name" value="mouse"/>
</dbReference>
<dbReference type="AGR" id="MGI:1349439"/>
<dbReference type="CTD" id="10980"/>
<dbReference type="MGI" id="MGI:1349439">
    <property type="gene designation" value="Cops6"/>
</dbReference>
<dbReference type="VEuPathDB" id="HostDB:ENSMUSG00000019494"/>
<dbReference type="eggNOG" id="KOG3050">
    <property type="taxonomic scope" value="Eukaryota"/>
</dbReference>
<dbReference type="GeneTree" id="ENSGT00950000183073"/>
<dbReference type="InParanoid" id="O88545"/>
<dbReference type="OMA" id="LVGWWST"/>
<dbReference type="OrthoDB" id="1378at2759"/>
<dbReference type="PhylomeDB" id="O88545"/>
<dbReference type="TreeFam" id="TF101148"/>
<dbReference type="Reactome" id="R-MMU-5696394">
    <property type="pathway name" value="DNA Damage Recognition in GG-NER"/>
</dbReference>
<dbReference type="Reactome" id="R-MMU-6781823">
    <property type="pathway name" value="Formation of TC-NER Pre-Incision Complex"/>
</dbReference>
<dbReference type="Reactome" id="R-MMU-8856825">
    <property type="pathway name" value="Cargo recognition for clathrin-mediated endocytosis"/>
</dbReference>
<dbReference type="Reactome" id="R-MMU-8951664">
    <property type="pathway name" value="Neddylation"/>
</dbReference>
<dbReference type="BioGRID-ORCS" id="26893">
    <property type="hits" value="29 hits in 77 CRISPR screens"/>
</dbReference>
<dbReference type="ChiTaRS" id="Cops6">
    <property type="organism name" value="mouse"/>
</dbReference>
<dbReference type="PRO" id="PR:O88545"/>
<dbReference type="Proteomes" id="UP000000589">
    <property type="component" value="Chromosome 5"/>
</dbReference>
<dbReference type="RNAct" id="O88545">
    <property type="molecule type" value="protein"/>
</dbReference>
<dbReference type="Bgee" id="ENSMUSG00000019494">
    <property type="expression patterns" value="Expressed in embryonic brain and 280 other cell types or tissues"/>
</dbReference>
<dbReference type="ExpressionAtlas" id="O88545">
    <property type="expression patterns" value="baseline and differential"/>
</dbReference>
<dbReference type="GO" id="GO:0008180">
    <property type="term" value="C:COP9 signalosome"/>
    <property type="evidence" value="ECO:0000314"/>
    <property type="project" value="MGI"/>
</dbReference>
<dbReference type="GO" id="GO:0005737">
    <property type="term" value="C:cytoplasm"/>
    <property type="evidence" value="ECO:0007669"/>
    <property type="project" value="UniProtKB-SubCell"/>
</dbReference>
<dbReference type="GO" id="GO:0008237">
    <property type="term" value="F:metallopeptidase activity"/>
    <property type="evidence" value="ECO:0007669"/>
    <property type="project" value="InterPro"/>
</dbReference>
<dbReference type="GO" id="GO:0000338">
    <property type="term" value="P:protein deneddylation"/>
    <property type="evidence" value="ECO:0007669"/>
    <property type="project" value="InterPro"/>
</dbReference>
<dbReference type="CDD" id="cd08063">
    <property type="entry name" value="MPN_CSN6"/>
    <property type="match status" value="1"/>
</dbReference>
<dbReference type="FunFam" id="3.40.140.10:FF:000017">
    <property type="entry name" value="COP9 signalosome complex subunit 6"/>
    <property type="match status" value="1"/>
</dbReference>
<dbReference type="Gene3D" id="3.40.140.10">
    <property type="entry name" value="Cytidine Deaminase, domain 2"/>
    <property type="match status" value="1"/>
</dbReference>
<dbReference type="InterPro" id="IPR024969">
    <property type="entry name" value="EIF3F/CSN6-like_C"/>
</dbReference>
<dbReference type="InterPro" id="IPR000555">
    <property type="entry name" value="JAMM/MPN+_dom"/>
</dbReference>
<dbReference type="InterPro" id="IPR037518">
    <property type="entry name" value="MPN"/>
</dbReference>
<dbReference type="InterPro" id="IPR033859">
    <property type="entry name" value="MPN_CSN6"/>
</dbReference>
<dbReference type="PANTHER" id="PTHR10540:SF8">
    <property type="entry name" value="COP9 SIGNALOSOME COMPLEX SUBUNIT 6"/>
    <property type="match status" value="1"/>
</dbReference>
<dbReference type="PANTHER" id="PTHR10540">
    <property type="entry name" value="EUKARYOTIC TRANSLATION INITIATION FACTOR 3 SUBUNIT F-RELATED"/>
    <property type="match status" value="1"/>
</dbReference>
<dbReference type="Pfam" id="PF01398">
    <property type="entry name" value="JAB"/>
    <property type="match status" value="1"/>
</dbReference>
<dbReference type="Pfam" id="PF13012">
    <property type="entry name" value="MitMem_reg"/>
    <property type="match status" value="1"/>
</dbReference>
<dbReference type="SMART" id="SM00232">
    <property type="entry name" value="JAB_MPN"/>
    <property type="match status" value="1"/>
</dbReference>
<dbReference type="PROSITE" id="PS50249">
    <property type="entry name" value="MPN"/>
    <property type="match status" value="1"/>
</dbReference>
<protein>
    <recommendedName>
        <fullName>COP9 signalosome complex subunit 6</fullName>
        <shortName>SGN6</shortName>
        <shortName>Signalosome subunit 6</shortName>
    </recommendedName>
    <alternativeName>
        <fullName>JAB1-containing signalosome subunit 6</fullName>
    </alternativeName>
</protein>
<accession>O88545</accession>
<evidence type="ECO:0000250" key="1">
    <source>
        <dbReference type="UniProtKB" id="Q7L5N1"/>
    </source>
</evidence>
<evidence type="ECO:0000255" key="2">
    <source>
        <dbReference type="PROSITE-ProRule" id="PRU01182"/>
    </source>
</evidence>
<evidence type="ECO:0000269" key="3">
    <source>
    </source>
</evidence>
<evidence type="ECO:0000305" key="4"/>